<gene>
    <name type="primary">STK4</name>
</gene>
<organism>
    <name type="scientific">Squalus acanthias</name>
    <name type="common">Spiny dogfish</name>
    <dbReference type="NCBI Taxonomy" id="7797"/>
    <lineage>
        <taxon>Eukaryota</taxon>
        <taxon>Metazoa</taxon>
        <taxon>Chordata</taxon>
        <taxon>Craniata</taxon>
        <taxon>Vertebrata</taxon>
        <taxon>Chondrichthyes</taxon>
        <taxon>Elasmobranchii</taxon>
        <taxon>Squalomorphii</taxon>
        <taxon>Squaliformes</taxon>
        <taxon>Squalidae</taxon>
        <taxon>Squalus</taxon>
    </lineage>
</organism>
<feature type="chain" id="PRO_0000247767" description="Serine/threonine-protein kinase 3/4">
    <location>
        <begin position="1"/>
        <end position="491"/>
    </location>
</feature>
<feature type="chain" id="PRO_0000413753" description="Serine/threonine-protein kinase 3/4 37kDa subunit" evidence="1">
    <location>
        <begin position="1"/>
        <end position="328"/>
    </location>
</feature>
<feature type="chain" id="PRO_0000413754" description="Serine/threonine-protein kinase 3/4 18kDa subunit" evidence="1">
    <location>
        <begin position="329"/>
        <end position="491"/>
    </location>
</feature>
<feature type="domain" description="Protein kinase" evidence="5">
    <location>
        <begin position="32"/>
        <end position="283"/>
    </location>
</feature>
<feature type="domain" description="SARAH" evidence="6">
    <location>
        <begin position="437"/>
        <end position="484"/>
    </location>
</feature>
<feature type="region of interest" description="Disordered" evidence="7">
    <location>
        <begin position="1"/>
        <end position="24"/>
    </location>
</feature>
<feature type="region of interest" description="Disordered" evidence="7">
    <location>
        <begin position="307"/>
        <end position="394"/>
    </location>
</feature>
<feature type="region of interest" description="Disordered" evidence="7">
    <location>
        <begin position="406"/>
        <end position="435"/>
    </location>
</feature>
<feature type="coiled-coil region" evidence="4">
    <location>
        <begin position="292"/>
        <end position="334"/>
    </location>
</feature>
<feature type="coiled-coil region" evidence="4">
    <location>
        <begin position="442"/>
        <end position="475"/>
    </location>
</feature>
<feature type="compositionally biased region" description="Basic residues" evidence="7">
    <location>
        <begin position="7"/>
        <end position="17"/>
    </location>
</feature>
<feature type="compositionally biased region" description="Acidic residues" evidence="7">
    <location>
        <begin position="315"/>
        <end position="328"/>
    </location>
</feature>
<feature type="compositionally biased region" description="Polar residues" evidence="7">
    <location>
        <begin position="363"/>
        <end position="373"/>
    </location>
</feature>
<feature type="compositionally biased region" description="Polar residues" evidence="7">
    <location>
        <begin position="410"/>
        <end position="428"/>
    </location>
</feature>
<feature type="active site" description="Proton acceptor" evidence="5">
    <location>
        <position position="151"/>
    </location>
</feature>
<feature type="binding site" evidence="5">
    <location>
        <begin position="38"/>
        <end position="46"/>
    </location>
    <ligand>
        <name>ATP</name>
        <dbReference type="ChEBI" id="CHEBI:30616"/>
    </ligand>
</feature>
<feature type="binding site" evidence="5">
    <location>
        <position position="61"/>
    </location>
    <ligand>
        <name>ATP</name>
        <dbReference type="ChEBI" id="CHEBI:30616"/>
    </ligand>
</feature>
<feature type="site" description="Cleavage; by caspase-3" evidence="1">
    <location>
        <begin position="328"/>
        <end position="329"/>
    </location>
</feature>
<feature type="modified residue" description="Phosphothreonine; by autocatalysis" evidence="1">
    <location>
        <position position="185"/>
    </location>
</feature>
<sequence length="491" mass="56160">MEEVQRRQHPHPRRSLKKLSEDSLTKQPEEVFDVLEKLGEGSYGSVFKAIHKESGQVVAIKQVPVESDLQEIIKEISIMQQCDSPHVVKYYGSYFKNTDLWIVMEYCGAGSVSDLIRIRNKTLTEDEIATILQSTLKGLEYLHFMRKIHRDIKAGNILLNNEGHAKLADFGVAGQLTDTMAKRNTVIGTPFWMAPEVIQEIGYNCVADIWSLGISAIEMAEGKPPYADIHPMRAIFMIPTNPPPTFRKPELWTDEFTDFVKQCLVKNPEQRAAATQLLQHPFIKNAKPVSILRDLITDMMEIKLKRQEEQQRDLDQDDEENSEEDDMDSGTMVRASAEDTGTMRAASTLSDGARTMIEHDSSTLDSQMGTMVINSGEDEEDGTMKRKEETIQQSKPSFLEYFEQKEKENQANSHSNRNAQALQNSSDNWKVPQDGDFESLKSWSVEELQRRLASLDPTMEQEIEEIRQRYQAKRQPILDAIDAKKRWQQNF</sequence>
<name>STK4_SQUAC</name>
<evidence type="ECO:0000250" key="1"/>
<evidence type="ECO:0000250" key="2">
    <source>
        <dbReference type="UniProtKB" id="Q13043"/>
    </source>
</evidence>
<evidence type="ECO:0000250" key="3">
    <source>
        <dbReference type="UniProtKB" id="Q9JI11"/>
    </source>
</evidence>
<evidence type="ECO:0000255" key="4"/>
<evidence type="ECO:0000255" key="5">
    <source>
        <dbReference type="PROSITE-ProRule" id="PRU00159"/>
    </source>
</evidence>
<evidence type="ECO:0000255" key="6">
    <source>
        <dbReference type="PROSITE-ProRule" id="PRU00310"/>
    </source>
</evidence>
<evidence type="ECO:0000256" key="7">
    <source>
        <dbReference type="SAM" id="MobiDB-lite"/>
    </source>
</evidence>
<evidence type="ECO:0000305" key="8"/>
<keyword id="KW-0053">Apoptosis</keyword>
<keyword id="KW-0067">ATP-binding</keyword>
<keyword id="KW-0175">Coiled coil</keyword>
<keyword id="KW-0963">Cytoplasm</keyword>
<keyword id="KW-0418">Kinase</keyword>
<keyword id="KW-0460">Magnesium</keyword>
<keyword id="KW-0479">Metal-binding</keyword>
<keyword id="KW-0547">Nucleotide-binding</keyword>
<keyword id="KW-0539">Nucleus</keyword>
<keyword id="KW-0597">Phosphoprotein</keyword>
<keyword id="KW-0723">Serine/threonine-protein kinase</keyword>
<keyword id="KW-0808">Transferase</keyword>
<protein>
    <recommendedName>
        <fullName>Serine/threonine-protein kinase 3/4</fullName>
        <ecNumber>2.7.11.1</ecNumber>
    </recommendedName>
    <alternativeName>
        <fullName>STE20-like kinase MST1/2</fullName>
        <shortName>sMST1/2</shortName>
    </alternativeName>
    <component>
        <recommendedName>
            <fullName>Serine/threonine-protein kinase 3/4 37kDa subunit</fullName>
        </recommendedName>
    </component>
    <component>
        <recommendedName>
            <fullName>Serine/threonine-protein kinase 3/4 18kDa subunit</fullName>
        </recommendedName>
    </component>
</protein>
<reference key="1">
    <citation type="journal article" date="2003" name="J. Biol. Chem.">
        <title>PASK (proline-alanine-rich STE20-related kinase), a regulatory kinase of the Na-K-Cl cotransporter (NKCC1).</title>
        <authorList>
            <person name="Dowd B.F.X."/>
            <person name="Forbush B."/>
        </authorList>
    </citation>
    <scope>NUCLEOTIDE SEQUENCE [MRNA]</scope>
    <source>
        <tissue>Kidney</tissue>
    </source>
</reference>
<dbReference type="EC" id="2.7.11.1"/>
<dbReference type="EMBL" id="AY242842">
    <property type="protein sequence ID" value="AAO49813.1"/>
    <property type="molecule type" value="mRNA"/>
</dbReference>
<dbReference type="SMR" id="Q802A6"/>
<dbReference type="GO" id="GO:0005737">
    <property type="term" value="C:cytoplasm"/>
    <property type="evidence" value="ECO:0000250"/>
    <property type="project" value="UniProtKB"/>
</dbReference>
<dbReference type="GO" id="GO:0005634">
    <property type="term" value="C:nucleus"/>
    <property type="evidence" value="ECO:0000250"/>
    <property type="project" value="UniProtKB"/>
</dbReference>
<dbReference type="GO" id="GO:0005524">
    <property type="term" value="F:ATP binding"/>
    <property type="evidence" value="ECO:0007669"/>
    <property type="project" value="UniProtKB-KW"/>
</dbReference>
<dbReference type="GO" id="GO:0046872">
    <property type="term" value="F:metal ion binding"/>
    <property type="evidence" value="ECO:0007669"/>
    <property type="project" value="UniProtKB-KW"/>
</dbReference>
<dbReference type="GO" id="GO:0106310">
    <property type="term" value="F:protein serine kinase activity"/>
    <property type="evidence" value="ECO:0007669"/>
    <property type="project" value="RHEA"/>
</dbReference>
<dbReference type="GO" id="GO:0004674">
    <property type="term" value="F:protein serine/threonine kinase activity"/>
    <property type="evidence" value="ECO:0000250"/>
    <property type="project" value="UniProtKB"/>
</dbReference>
<dbReference type="GO" id="GO:0006915">
    <property type="term" value="P:apoptotic process"/>
    <property type="evidence" value="ECO:0000250"/>
    <property type="project" value="UniProtKB"/>
</dbReference>
<dbReference type="GO" id="GO:0035329">
    <property type="term" value="P:hippo signaling"/>
    <property type="evidence" value="ECO:0000250"/>
    <property type="project" value="UniProtKB"/>
</dbReference>
<dbReference type="CDD" id="cd21887">
    <property type="entry name" value="SARAH_MST1"/>
    <property type="match status" value="1"/>
</dbReference>
<dbReference type="CDD" id="cd06612">
    <property type="entry name" value="STKc_MST1_2"/>
    <property type="match status" value="1"/>
</dbReference>
<dbReference type="FunFam" id="1.10.287.4270:FF:000001">
    <property type="entry name" value="Serine/threonine-protein kinase 3"/>
    <property type="match status" value="1"/>
</dbReference>
<dbReference type="FunFam" id="1.10.510.10:FF:000075">
    <property type="entry name" value="Serine/threonine-protein kinase 3"/>
    <property type="match status" value="1"/>
</dbReference>
<dbReference type="FunFam" id="3.30.200.20:FF:000410">
    <property type="entry name" value="Serine/threonine-protein kinase 3"/>
    <property type="match status" value="1"/>
</dbReference>
<dbReference type="FunFam" id="4.10.170.10:FF:000002">
    <property type="entry name" value="serine/threonine-protein kinase 3"/>
    <property type="match status" value="1"/>
</dbReference>
<dbReference type="FunFam" id="1.10.287.4270:FF:000004">
    <property type="entry name" value="Serine/threonine-protein kinase 3/4"/>
    <property type="match status" value="1"/>
</dbReference>
<dbReference type="Gene3D" id="1.10.287.4270">
    <property type="match status" value="2"/>
</dbReference>
<dbReference type="Gene3D" id="1.10.510.10">
    <property type="entry name" value="Transferase(Phosphotransferase) domain 1"/>
    <property type="match status" value="1"/>
</dbReference>
<dbReference type="InterPro" id="IPR011009">
    <property type="entry name" value="Kinase-like_dom_sf"/>
</dbReference>
<dbReference type="InterPro" id="IPR024205">
    <property type="entry name" value="Mst1_2_SARAH_domain"/>
</dbReference>
<dbReference type="InterPro" id="IPR000719">
    <property type="entry name" value="Prot_kinase_dom"/>
</dbReference>
<dbReference type="InterPro" id="IPR017441">
    <property type="entry name" value="Protein_kinase_ATP_BS"/>
</dbReference>
<dbReference type="InterPro" id="IPR011524">
    <property type="entry name" value="SARAH_dom"/>
</dbReference>
<dbReference type="InterPro" id="IPR050629">
    <property type="entry name" value="STE20/SPS1-PAK"/>
</dbReference>
<dbReference type="PANTHER" id="PTHR48012:SF2">
    <property type="entry name" value="STERILE20-LIKE KINASE, ISOFORM B"/>
    <property type="match status" value="1"/>
</dbReference>
<dbReference type="PANTHER" id="PTHR48012">
    <property type="entry name" value="STERILE20-LIKE KINASE, ISOFORM B-RELATED"/>
    <property type="match status" value="1"/>
</dbReference>
<dbReference type="Pfam" id="PF11629">
    <property type="entry name" value="Mst1_SARAH"/>
    <property type="match status" value="1"/>
</dbReference>
<dbReference type="Pfam" id="PF00069">
    <property type="entry name" value="Pkinase"/>
    <property type="match status" value="1"/>
</dbReference>
<dbReference type="SMART" id="SM00220">
    <property type="entry name" value="S_TKc"/>
    <property type="match status" value="1"/>
</dbReference>
<dbReference type="SUPFAM" id="SSF56112">
    <property type="entry name" value="Protein kinase-like (PK-like)"/>
    <property type="match status" value="1"/>
</dbReference>
<dbReference type="PROSITE" id="PS00107">
    <property type="entry name" value="PROTEIN_KINASE_ATP"/>
    <property type="match status" value="1"/>
</dbReference>
<dbReference type="PROSITE" id="PS50011">
    <property type="entry name" value="PROTEIN_KINASE_DOM"/>
    <property type="match status" value="1"/>
</dbReference>
<dbReference type="PROSITE" id="PS50951">
    <property type="entry name" value="SARAH"/>
    <property type="match status" value="1"/>
</dbReference>
<accession>Q802A6</accession>
<comment type="function">
    <text evidence="2 3">Stress-activated, pro-apoptotic kinase which, following caspase-cleavage, enters the nucleus and induces chromatin condensation followed by internucleosomal DNA fragmentation. Key component of the Hippo signaling pathway which plays a pivotal role in organ size control and tumor suppression by restricting proliferation and promoting apoptosis. The core of this pathway is composed of a kinase cascade wherein stk3/mst2 and stk4/mst1, in complex with its regulatory protein sav1, phosphorylates and activates lats1/2 in complex with its regulatory protein mob1, which in turn phosphorylates and inactivates yap1 oncoprotein and wwtr1/taz. Phosphorylation of yap1 by lats2 inhibits its translocation into the nucleus to regulate cellular genes important for cell proliferation, cell death, and cell migration. Phosphorylates 'Ser-14' of histone H2B (H2BS14ph) during apoptosis.</text>
</comment>
<comment type="catalytic activity">
    <reaction evidence="2">
        <text>L-seryl-[protein] + ATP = O-phospho-L-seryl-[protein] + ADP + H(+)</text>
        <dbReference type="Rhea" id="RHEA:17989"/>
        <dbReference type="Rhea" id="RHEA-COMP:9863"/>
        <dbReference type="Rhea" id="RHEA-COMP:11604"/>
        <dbReference type="ChEBI" id="CHEBI:15378"/>
        <dbReference type="ChEBI" id="CHEBI:29999"/>
        <dbReference type="ChEBI" id="CHEBI:30616"/>
        <dbReference type="ChEBI" id="CHEBI:83421"/>
        <dbReference type="ChEBI" id="CHEBI:456216"/>
        <dbReference type="EC" id="2.7.11.1"/>
    </reaction>
    <physiologicalReaction direction="left-to-right" evidence="2">
        <dbReference type="Rhea" id="RHEA:17990"/>
    </physiologicalReaction>
</comment>
<comment type="catalytic activity">
    <reaction evidence="2">
        <text>L-threonyl-[protein] + ATP = O-phospho-L-threonyl-[protein] + ADP + H(+)</text>
        <dbReference type="Rhea" id="RHEA:46608"/>
        <dbReference type="Rhea" id="RHEA-COMP:11060"/>
        <dbReference type="Rhea" id="RHEA-COMP:11605"/>
        <dbReference type="ChEBI" id="CHEBI:15378"/>
        <dbReference type="ChEBI" id="CHEBI:30013"/>
        <dbReference type="ChEBI" id="CHEBI:30616"/>
        <dbReference type="ChEBI" id="CHEBI:61977"/>
        <dbReference type="ChEBI" id="CHEBI:456216"/>
        <dbReference type="EC" id="2.7.11.1"/>
    </reaction>
    <physiologicalReaction direction="left-to-right" evidence="2">
        <dbReference type="Rhea" id="RHEA:46609"/>
    </physiologicalReaction>
</comment>
<comment type="cofactor">
    <cofactor evidence="1">
        <name>Mg(2+)</name>
        <dbReference type="ChEBI" id="CHEBI:18420"/>
    </cofactor>
</comment>
<comment type="activity regulation">
    <text evidence="1">Inhibited by the C-terminal non-catalytic region. Activated by caspase-cleavage. Full activation also requires homodimerization and autophosphorylation of Thr-185 (By similarity).</text>
</comment>
<comment type="subunit">
    <text evidence="1">Homodimer; mediated via the coiled-coil region.</text>
</comment>
<comment type="subcellular location">
    <subcellularLocation>
        <location evidence="1">Cytoplasm</location>
    </subcellularLocation>
    <subcellularLocation>
        <location evidence="1">Nucleus</location>
    </subcellularLocation>
    <text evidence="1">The caspase-cleaved form cycles between nucleus and cytoplasm.</text>
</comment>
<comment type="PTM">
    <text evidence="1">Proteolytically cleaved by caspase-3 during apoptosis at Asp-328 resulting in a 37 kDa form. Proteolytic cleavage results in kinase activation and nuclear translocation of the truncated form (MST1/N) (By similarity).</text>
</comment>
<comment type="similarity">
    <text evidence="8">Belongs to the protein kinase superfamily. STE Ser/Thr protein kinase family. STE20 subfamily.</text>
</comment>
<proteinExistence type="evidence at transcript level"/>